<accession>A9MFP0</accession>
<protein>
    <recommendedName>
        <fullName evidence="1">RNA-binding protein Hfq</fullName>
    </recommendedName>
</protein>
<reference key="1">
    <citation type="submission" date="2007-11" db="EMBL/GenBank/DDBJ databases">
        <authorList>
            <consortium name="The Salmonella enterica serovar Arizonae Genome Sequencing Project"/>
            <person name="McClelland M."/>
            <person name="Sanderson E.K."/>
            <person name="Porwollik S."/>
            <person name="Spieth J."/>
            <person name="Clifton W.S."/>
            <person name="Fulton R."/>
            <person name="Chunyan W."/>
            <person name="Wollam A."/>
            <person name="Shah N."/>
            <person name="Pepin K."/>
            <person name="Bhonagiri V."/>
            <person name="Nash W."/>
            <person name="Johnson M."/>
            <person name="Thiruvilangam P."/>
            <person name="Wilson R."/>
        </authorList>
    </citation>
    <scope>NUCLEOTIDE SEQUENCE [LARGE SCALE GENOMIC DNA]</scope>
    <source>
        <strain>ATCC BAA-731 / CDC346-86 / RSK2980</strain>
    </source>
</reference>
<comment type="function">
    <text evidence="1">RNA chaperone that binds small regulatory RNA (sRNAs) and mRNAs to facilitate mRNA translational regulation in response to envelope stress, environmental stress and changes in metabolite concentrations. Also binds with high specificity to tRNAs.</text>
</comment>
<comment type="subunit">
    <text evidence="1">Homohexamer.</text>
</comment>
<comment type="similarity">
    <text evidence="1">Belongs to the Hfq family.</text>
</comment>
<organism>
    <name type="scientific">Salmonella arizonae (strain ATCC BAA-731 / CDC346-86 / RSK2980)</name>
    <dbReference type="NCBI Taxonomy" id="41514"/>
    <lineage>
        <taxon>Bacteria</taxon>
        <taxon>Pseudomonadati</taxon>
        <taxon>Pseudomonadota</taxon>
        <taxon>Gammaproteobacteria</taxon>
        <taxon>Enterobacterales</taxon>
        <taxon>Enterobacteriaceae</taxon>
        <taxon>Salmonella</taxon>
    </lineage>
</organism>
<name>HFQ_SALAR</name>
<gene>
    <name evidence="1" type="primary">hfq</name>
    <name type="ordered locus">SARI_03270</name>
</gene>
<keyword id="KW-1185">Reference proteome</keyword>
<keyword id="KW-0694">RNA-binding</keyword>
<keyword id="KW-0346">Stress response</keyword>
<feature type="chain" id="PRO_1000080686" description="RNA-binding protein Hfq">
    <location>
        <begin position="1"/>
        <end position="102"/>
    </location>
</feature>
<feature type="domain" description="Sm" evidence="2">
    <location>
        <begin position="9"/>
        <end position="68"/>
    </location>
</feature>
<feature type="region of interest" description="Disordered" evidence="3">
    <location>
        <begin position="63"/>
        <end position="102"/>
    </location>
</feature>
<feature type="compositionally biased region" description="Polar residues" evidence="3">
    <location>
        <begin position="70"/>
        <end position="96"/>
    </location>
</feature>
<proteinExistence type="inferred from homology"/>
<evidence type="ECO:0000255" key="1">
    <source>
        <dbReference type="HAMAP-Rule" id="MF_00436"/>
    </source>
</evidence>
<evidence type="ECO:0000255" key="2">
    <source>
        <dbReference type="PROSITE-ProRule" id="PRU01346"/>
    </source>
</evidence>
<evidence type="ECO:0000256" key="3">
    <source>
        <dbReference type="SAM" id="MobiDB-lite"/>
    </source>
</evidence>
<sequence length="102" mass="11119">MAKGQSLQDPFLNALRRERVPVSIYLVNGIKLQGQIESFDQFVILLKNTVSQMVYKHAISTVVPSRPVSHHSNNAGGGTSNNYHHGSNAQGSGAQQDSEETE</sequence>
<dbReference type="EMBL" id="CP000880">
    <property type="protein sequence ID" value="ABX23106.1"/>
    <property type="molecule type" value="Genomic_DNA"/>
</dbReference>
<dbReference type="SMR" id="A9MFP0"/>
<dbReference type="STRING" id="41514.SARI_03270"/>
<dbReference type="KEGG" id="ses:SARI_03270"/>
<dbReference type="HOGENOM" id="CLU_113688_2_1_6"/>
<dbReference type="Proteomes" id="UP000002084">
    <property type="component" value="Chromosome"/>
</dbReference>
<dbReference type="GO" id="GO:0005829">
    <property type="term" value="C:cytosol"/>
    <property type="evidence" value="ECO:0007669"/>
    <property type="project" value="TreeGrafter"/>
</dbReference>
<dbReference type="GO" id="GO:0003723">
    <property type="term" value="F:RNA binding"/>
    <property type="evidence" value="ECO:0007669"/>
    <property type="project" value="UniProtKB-UniRule"/>
</dbReference>
<dbReference type="GO" id="GO:0006355">
    <property type="term" value="P:regulation of DNA-templated transcription"/>
    <property type="evidence" value="ECO:0007669"/>
    <property type="project" value="InterPro"/>
</dbReference>
<dbReference type="GO" id="GO:0043487">
    <property type="term" value="P:regulation of RNA stability"/>
    <property type="evidence" value="ECO:0007669"/>
    <property type="project" value="TreeGrafter"/>
</dbReference>
<dbReference type="GO" id="GO:0045974">
    <property type="term" value="P:regulation of translation, ncRNA-mediated"/>
    <property type="evidence" value="ECO:0007669"/>
    <property type="project" value="TreeGrafter"/>
</dbReference>
<dbReference type="CDD" id="cd01716">
    <property type="entry name" value="Hfq"/>
    <property type="match status" value="1"/>
</dbReference>
<dbReference type="FunFam" id="2.30.30.100:FF:000001">
    <property type="entry name" value="RNA-binding protein Hfq"/>
    <property type="match status" value="1"/>
</dbReference>
<dbReference type="Gene3D" id="2.30.30.100">
    <property type="match status" value="1"/>
</dbReference>
<dbReference type="HAMAP" id="MF_00436">
    <property type="entry name" value="Hfq"/>
    <property type="match status" value="1"/>
</dbReference>
<dbReference type="InterPro" id="IPR005001">
    <property type="entry name" value="Hfq"/>
</dbReference>
<dbReference type="InterPro" id="IPR010920">
    <property type="entry name" value="LSM_dom_sf"/>
</dbReference>
<dbReference type="InterPro" id="IPR047575">
    <property type="entry name" value="Sm"/>
</dbReference>
<dbReference type="NCBIfam" id="TIGR02383">
    <property type="entry name" value="Hfq"/>
    <property type="match status" value="1"/>
</dbReference>
<dbReference type="NCBIfam" id="NF001602">
    <property type="entry name" value="PRK00395.1"/>
    <property type="match status" value="1"/>
</dbReference>
<dbReference type="PANTHER" id="PTHR34772">
    <property type="entry name" value="RNA-BINDING PROTEIN HFQ"/>
    <property type="match status" value="1"/>
</dbReference>
<dbReference type="PANTHER" id="PTHR34772:SF1">
    <property type="entry name" value="RNA-BINDING PROTEIN HFQ"/>
    <property type="match status" value="1"/>
</dbReference>
<dbReference type="Pfam" id="PF17209">
    <property type="entry name" value="Hfq"/>
    <property type="match status" value="1"/>
</dbReference>
<dbReference type="SUPFAM" id="SSF50182">
    <property type="entry name" value="Sm-like ribonucleoproteins"/>
    <property type="match status" value="1"/>
</dbReference>
<dbReference type="PROSITE" id="PS52002">
    <property type="entry name" value="SM"/>
    <property type="match status" value="1"/>
</dbReference>